<gene>
    <name evidence="1" type="primary">xerD</name>
    <name type="ordered locus">CT_864</name>
</gene>
<sequence length="300" mass="34572">MTPSALFHKRLIEQFTIFLSVDRGISPLSVQAYCQDVLLFLQRASIEATDRINQESVFLFVEKCHKAKESETTLARRLIALKVFFHFLKDAKMLDQQPFIEHPKIWKRLPSILSTEEVNSLLDQPLNIPNLDTHIASRDAAILYTFYATGIRVSELCDLCIGDISDDFIRVTGKGRKTRLVPISIKAKQAIDAYLSSFRDELQKKNPSEEHVFLSIRGKKLDRSCVWKRITFYAKLVTTKRISPHSLRHAFATHLLNNHADLRIIQEMLGHSRISSTEIYTHVASESLIEKFHTYHPRDI</sequence>
<protein>
    <recommendedName>
        <fullName evidence="1">Tyrosine recombinase XerD</fullName>
    </recommendedName>
</protein>
<comment type="function">
    <text evidence="1">Site-specific tyrosine recombinase, which acts by catalyzing the cutting and rejoining of the recombining DNA molecules. The XerC-XerD complex is essential to convert dimers of the bacterial chromosome into monomers to permit their segregation at cell division. It also contributes to the segregational stability of plasmids.</text>
</comment>
<comment type="subunit">
    <text evidence="1">Forms a cyclic heterotetrameric complex composed of two molecules of XerC and two molecules of XerD.</text>
</comment>
<comment type="subcellular location">
    <subcellularLocation>
        <location evidence="1">Cytoplasm</location>
    </subcellularLocation>
</comment>
<comment type="similarity">
    <text evidence="1">Belongs to the 'phage' integrase family. XerD subfamily.</text>
</comment>
<reference key="1">
    <citation type="journal article" date="1998" name="Science">
        <title>Genome sequence of an obligate intracellular pathogen of humans: Chlamydia trachomatis.</title>
        <authorList>
            <person name="Stephens R.S."/>
            <person name="Kalman S."/>
            <person name="Lammel C.J."/>
            <person name="Fan J."/>
            <person name="Marathe R."/>
            <person name="Aravind L."/>
            <person name="Mitchell W.P."/>
            <person name="Olinger L."/>
            <person name="Tatusov R.L."/>
            <person name="Zhao Q."/>
            <person name="Koonin E.V."/>
            <person name="Davis R.W."/>
        </authorList>
    </citation>
    <scope>NUCLEOTIDE SEQUENCE [LARGE SCALE GENOMIC DNA]</scope>
    <source>
        <strain>ATCC VR-885 / DSM 19411 / UW-3/Cx</strain>
    </source>
</reference>
<name>XERD_CHLTR</name>
<evidence type="ECO:0000255" key="1">
    <source>
        <dbReference type="HAMAP-Rule" id="MF_01807"/>
    </source>
</evidence>
<evidence type="ECO:0000255" key="2">
    <source>
        <dbReference type="PROSITE-ProRule" id="PRU01246"/>
    </source>
</evidence>
<evidence type="ECO:0000255" key="3">
    <source>
        <dbReference type="PROSITE-ProRule" id="PRU01248"/>
    </source>
</evidence>
<dbReference type="EMBL" id="AE001273">
    <property type="protein sequence ID" value="AAC68462.1"/>
    <property type="molecule type" value="Genomic_DNA"/>
</dbReference>
<dbReference type="PIR" id="G71461">
    <property type="entry name" value="G71461"/>
</dbReference>
<dbReference type="RefSeq" id="NP_220386.1">
    <property type="nucleotide sequence ID" value="NC_000117.1"/>
</dbReference>
<dbReference type="RefSeq" id="WP_009872254.1">
    <property type="nucleotide sequence ID" value="NC_000117.1"/>
</dbReference>
<dbReference type="SMR" id="O84872"/>
<dbReference type="FunCoup" id="O84872">
    <property type="interactions" value="162"/>
</dbReference>
<dbReference type="STRING" id="272561.CT_864"/>
<dbReference type="EnsemblBacteria" id="AAC68462">
    <property type="protein sequence ID" value="AAC68462"/>
    <property type="gene ID" value="CT_864"/>
</dbReference>
<dbReference type="GeneID" id="884666"/>
<dbReference type="KEGG" id="ctr:CT_864"/>
<dbReference type="PATRIC" id="fig|272561.5.peg.955"/>
<dbReference type="HOGENOM" id="CLU_027562_9_6_0"/>
<dbReference type="InParanoid" id="O84872"/>
<dbReference type="OrthoDB" id="9801717at2"/>
<dbReference type="Proteomes" id="UP000000431">
    <property type="component" value="Chromosome"/>
</dbReference>
<dbReference type="GO" id="GO:0005737">
    <property type="term" value="C:cytoplasm"/>
    <property type="evidence" value="ECO:0007669"/>
    <property type="project" value="UniProtKB-SubCell"/>
</dbReference>
<dbReference type="GO" id="GO:0048476">
    <property type="term" value="C:Holliday junction resolvase complex"/>
    <property type="evidence" value="ECO:0000318"/>
    <property type="project" value="GO_Central"/>
</dbReference>
<dbReference type="GO" id="GO:0003677">
    <property type="term" value="F:DNA binding"/>
    <property type="evidence" value="ECO:0000318"/>
    <property type="project" value="GO_Central"/>
</dbReference>
<dbReference type="GO" id="GO:0009037">
    <property type="term" value="F:tyrosine-based site-specific recombinase activity"/>
    <property type="evidence" value="ECO:0000318"/>
    <property type="project" value="GO_Central"/>
</dbReference>
<dbReference type="GO" id="GO:0051301">
    <property type="term" value="P:cell division"/>
    <property type="evidence" value="ECO:0007669"/>
    <property type="project" value="UniProtKB-KW"/>
</dbReference>
<dbReference type="GO" id="GO:0007059">
    <property type="term" value="P:chromosome segregation"/>
    <property type="evidence" value="ECO:0000318"/>
    <property type="project" value="GO_Central"/>
</dbReference>
<dbReference type="GO" id="GO:0006310">
    <property type="term" value="P:DNA recombination"/>
    <property type="evidence" value="ECO:0000318"/>
    <property type="project" value="GO_Central"/>
</dbReference>
<dbReference type="GO" id="GO:0006313">
    <property type="term" value="P:DNA transposition"/>
    <property type="evidence" value="ECO:0007669"/>
    <property type="project" value="UniProtKB-UniRule"/>
</dbReference>
<dbReference type="GO" id="GO:0071139">
    <property type="term" value="P:resolution of DNA recombination intermediates"/>
    <property type="evidence" value="ECO:0000318"/>
    <property type="project" value="GO_Central"/>
</dbReference>
<dbReference type="CDD" id="cd00798">
    <property type="entry name" value="INT_XerDC_C"/>
    <property type="match status" value="1"/>
</dbReference>
<dbReference type="Gene3D" id="1.10.150.130">
    <property type="match status" value="1"/>
</dbReference>
<dbReference type="Gene3D" id="1.10.443.10">
    <property type="entry name" value="Intergrase catalytic core"/>
    <property type="match status" value="1"/>
</dbReference>
<dbReference type="HAMAP" id="MF_01808">
    <property type="entry name" value="Recomb_XerC_XerD"/>
    <property type="match status" value="1"/>
</dbReference>
<dbReference type="HAMAP" id="MF_01807">
    <property type="entry name" value="Recomb_XerD"/>
    <property type="match status" value="1"/>
</dbReference>
<dbReference type="InterPro" id="IPR044068">
    <property type="entry name" value="CB"/>
</dbReference>
<dbReference type="InterPro" id="IPR011010">
    <property type="entry name" value="DNA_brk_join_enz"/>
</dbReference>
<dbReference type="InterPro" id="IPR013762">
    <property type="entry name" value="Integrase-like_cat_sf"/>
</dbReference>
<dbReference type="InterPro" id="IPR002104">
    <property type="entry name" value="Integrase_catalytic"/>
</dbReference>
<dbReference type="InterPro" id="IPR010998">
    <property type="entry name" value="Integrase_recombinase_N"/>
</dbReference>
<dbReference type="InterPro" id="IPR004107">
    <property type="entry name" value="Integrase_SAM-like_N"/>
</dbReference>
<dbReference type="InterPro" id="IPR011932">
    <property type="entry name" value="Recomb_XerD"/>
</dbReference>
<dbReference type="InterPro" id="IPR023009">
    <property type="entry name" value="Tyrosine_recombinase_XerC/XerD"/>
</dbReference>
<dbReference type="InterPro" id="IPR050090">
    <property type="entry name" value="Tyrosine_recombinase_XerCD"/>
</dbReference>
<dbReference type="NCBIfam" id="NF001399">
    <property type="entry name" value="PRK00283.1"/>
    <property type="match status" value="1"/>
</dbReference>
<dbReference type="PANTHER" id="PTHR30349">
    <property type="entry name" value="PHAGE INTEGRASE-RELATED"/>
    <property type="match status" value="1"/>
</dbReference>
<dbReference type="PANTHER" id="PTHR30349:SF81">
    <property type="entry name" value="TYROSINE RECOMBINASE XERC"/>
    <property type="match status" value="1"/>
</dbReference>
<dbReference type="Pfam" id="PF02899">
    <property type="entry name" value="Phage_int_SAM_1"/>
    <property type="match status" value="1"/>
</dbReference>
<dbReference type="Pfam" id="PF00589">
    <property type="entry name" value="Phage_integrase"/>
    <property type="match status" value="1"/>
</dbReference>
<dbReference type="SUPFAM" id="SSF56349">
    <property type="entry name" value="DNA breaking-rejoining enzymes"/>
    <property type="match status" value="1"/>
</dbReference>
<dbReference type="SUPFAM" id="SSF47823">
    <property type="entry name" value="lambda integrase-like, N-terminal domain"/>
    <property type="match status" value="1"/>
</dbReference>
<dbReference type="PROSITE" id="PS51900">
    <property type="entry name" value="CB"/>
    <property type="match status" value="1"/>
</dbReference>
<dbReference type="PROSITE" id="PS51898">
    <property type="entry name" value="TYR_RECOMBINASE"/>
    <property type="match status" value="1"/>
</dbReference>
<proteinExistence type="inferred from homology"/>
<feature type="chain" id="PRO_0000095382" description="Tyrosine recombinase XerD">
    <location>
        <begin position="1"/>
        <end position="300"/>
    </location>
</feature>
<feature type="domain" description="Core-binding (CB)" evidence="3">
    <location>
        <begin position="6"/>
        <end position="89"/>
    </location>
</feature>
<feature type="domain" description="Tyr recombinase" evidence="2">
    <location>
        <begin position="108"/>
        <end position="293"/>
    </location>
</feature>
<feature type="active site" evidence="1">
    <location>
        <position position="152"/>
    </location>
</feature>
<feature type="active site" evidence="1">
    <location>
        <position position="174"/>
    </location>
</feature>
<feature type="active site" evidence="1">
    <location>
        <position position="245"/>
    </location>
</feature>
<feature type="active site" evidence="1">
    <location>
        <position position="248"/>
    </location>
</feature>
<feature type="active site" evidence="1">
    <location>
        <position position="271"/>
    </location>
</feature>
<feature type="active site" description="O-(3'-phospho-DNA)-tyrosine intermediate" evidence="1">
    <location>
        <position position="280"/>
    </location>
</feature>
<keyword id="KW-0131">Cell cycle</keyword>
<keyword id="KW-0132">Cell division</keyword>
<keyword id="KW-0159">Chromosome partition</keyword>
<keyword id="KW-0963">Cytoplasm</keyword>
<keyword id="KW-0229">DNA integration</keyword>
<keyword id="KW-0233">DNA recombination</keyword>
<keyword id="KW-0238">DNA-binding</keyword>
<keyword id="KW-1185">Reference proteome</keyword>
<accession>O84872</accession>
<organism>
    <name type="scientific">Chlamydia trachomatis serovar D (strain ATCC VR-885 / DSM 19411 / UW-3/Cx)</name>
    <dbReference type="NCBI Taxonomy" id="272561"/>
    <lineage>
        <taxon>Bacteria</taxon>
        <taxon>Pseudomonadati</taxon>
        <taxon>Chlamydiota</taxon>
        <taxon>Chlamydiia</taxon>
        <taxon>Chlamydiales</taxon>
        <taxon>Chlamydiaceae</taxon>
        <taxon>Chlamydia/Chlamydophila group</taxon>
        <taxon>Chlamydia</taxon>
    </lineage>
</organism>